<dbReference type="EMBL" id="DS480439">
    <property type="protein sequence ID" value="EDO15937.1"/>
    <property type="molecule type" value="Genomic_DNA"/>
</dbReference>
<dbReference type="RefSeq" id="XP_001643795.1">
    <property type="nucleotide sequence ID" value="XM_001643745.1"/>
</dbReference>
<dbReference type="FunCoup" id="A7TP86">
    <property type="interactions" value="40"/>
</dbReference>
<dbReference type="GeneID" id="5544051"/>
<dbReference type="KEGG" id="vpo:Kpol_480p24"/>
<dbReference type="eggNOG" id="ENOG502QT12">
    <property type="taxonomic scope" value="Eukaryota"/>
</dbReference>
<dbReference type="HOGENOM" id="CLU_058942_0_0_1"/>
<dbReference type="InParanoid" id="A7TP86"/>
<dbReference type="OMA" id="WCEDQDP"/>
<dbReference type="OrthoDB" id="4058511at2759"/>
<dbReference type="PhylomeDB" id="A7TP86"/>
<dbReference type="Proteomes" id="UP000000267">
    <property type="component" value="Unassembled WGS sequence"/>
</dbReference>
<dbReference type="GO" id="GO:0031966">
    <property type="term" value="C:mitochondrial membrane"/>
    <property type="evidence" value="ECO:0007669"/>
    <property type="project" value="UniProtKB-SubCell"/>
</dbReference>
<accession>A7TP86</accession>
<name>AIM39_VANPO</name>
<keyword id="KW-0472">Membrane</keyword>
<keyword id="KW-0496">Mitochondrion</keyword>
<keyword id="KW-1185">Reference proteome</keyword>
<keyword id="KW-0809">Transit peptide</keyword>
<keyword id="KW-0812">Transmembrane</keyword>
<keyword id="KW-1133">Transmembrane helix</keyword>
<evidence type="ECO:0000255" key="1"/>
<evidence type="ECO:0000256" key="2">
    <source>
        <dbReference type="SAM" id="MobiDB-lite"/>
    </source>
</evidence>
<evidence type="ECO:0000305" key="3"/>
<reference key="1">
    <citation type="journal article" date="2007" name="Proc. Natl. Acad. Sci. U.S.A.">
        <title>Independent sorting-out of thousands of duplicated gene pairs in two yeast species descended from a whole-genome duplication.</title>
        <authorList>
            <person name="Scannell D.R."/>
            <person name="Frank A.C."/>
            <person name="Conant G.C."/>
            <person name="Byrne K.P."/>
            <person name="Woolfit M."/>
            <person name="Wolfe K.H."/>
        </authorList>
    </citation>
    <scope>NUCLEOTIDE SEQUENCE [LARGE SCALE GENOMIC DNA]</scope>
    <source>
        <strain>ATCC 22028 / DSM 70294 / BCRC 21397 / CBS 2163 / NBRC 10782 / NRRL Y-8283 / UCD 57-17</strain>
    </source>
</reference>
<gene>
    <name type="primary">AIM39</name>
    <name type="ORF">Kpol_480p24</name>
</gene>
<feature type="transit peptide" description="Mitochondrion" evidence="1">
    <location>
        <begin position="1"/>
        <end position="29"/>
    </location>
</feature>
<feature type="chain" id="PRO_0000399846" description="Altered inheritance of mitochondria protein 39, mitochondrial">
    <location>
        <begin position="30"/>
        <end position="345"/>
    </location>
</feature>
<feature type="transmembrane region" description="Helical" evidence="1">
    <location>
        <begin position="113"/>
        <end position="133"/>
    </location>
</feature>
<feature type="region of interest" description="Disordered" evidence="2">
    <location>
        <begin position="46"/>
        <end position="91"/>
    </location>
</feature>
<feature type="compositionally biased region" description="Polar residues" evidence="2">
    <location>
        <begin position="64"/>
        <end position="75"/>
    </location>
</feature>
<feature type="compositionally biased region" description="Low complexity" evidence="2">
    <location>
        <begin position="76"/>
        <end position="89"/>
    </location>
</feature>
<proteinExistence type="inferred from homology"/>
<sequence>MLSLRRGLITKSYLNYKFVNHLAVIPRNYSNDSKYFFSKPPANDNNDKGSYADSKHFFTKPNGKMNSNEQIDQMHNNGSNNPNNNKNGSTDSLIGQAILQQRRERRKQVWYALGISIFAVLIGYSIGYKVIYLNEDSFIPLYPSSGIRKPSQNDLRKIDVPHIKLISHLRVLEVLSHHDMIKEQYGVPLHDSNGVNPPQIKEFNIWCEDQDPCVTGLIIRKDDPNRPTTHTWHRIPYLLQWRVTHRPICISRSISNFLEDIGLSYSTIYEIISPEKIYGSFKYEYPIPGDDHSMHIWFLGELQLNNDTLIIYKGKYHVDVKLQQVDLLRNEDGKLVRYVLFKENE</sequence>
<organism>
    <name type="scientific">Vanderwaltozyma polyspora (strain ATCC 22028 / DSM 70294 / BCRC 21397 / CBS 2163 / NBRC 10782 / NRRL Y-8283 / UCD 57-17)</name>
    <name type="common">Kluyveromyces polysporus</name>
    <dbReference type="NCBI Taxonomy" id="436907"/>
    <lineage>
        <taxon>Eukaryota</taxon>
        <taxon>Fungi</taxon>
        <taxon>Dikarya</taxon>
        <taxon>Ascomycota</taxon>
        <taxon>Saccharomycotina</taxon>
        <taxon>Saccharomycetes</taxon>
        <taxon>Saccharomycetales</taxon>
        <taxon>Saccharomycetaceae</taxon>
        <taxon>Vanderwaltozyma</taxon>
    </lineage>
</organism>
<comment type="subcellular location">
    <subcellularLocation>
        <location evidence="3">Mitochondrion membrane</location>
        <topology evidence="3">Single-pass membrane protein</topology>
    </subcellularLocation>
</comment>
<comment type="similarity">
    <text evidence="3">Belongs to the AIM39 family.</text>
</comment>
<protein>
    <recommendedName>
        <fullName>Altered inheritance of mitochondria protein 39, mitochondrial</fullName>
    </recommendedName>
</protein>